<reference key="1">
    <citation type="journal article" date="2009" name="PLoS Genet.">
        <title>Organised genome dynamics in the Escherichia coli species results in highly diverse adaptive paths.</title>
        <authorList>
            <person name="Touchon M."/>
            <person name="Hoede C."/>
            <person name="Tenaillon O."/>
            <person name="Barbe V."/>
            <person name="Baeriswyl S."/>
            <person name="Bidet P."/>
            <person name="Bingen E."/>
            <person name="Bonacorsi S."/>
            <person name="Bouchier C."/>
            <person name="Bouvet O."/>
            <person name="Calteau A."/>
            <person name="Chiapello H."/>
            <person name="Clermont O."/>
            <person name="Cruveiller S."/>
            <person name="Danchin A."/>
            <person name="Diard M."/>
            <person name="Dossat C."/>
            <person name="Karoui M.E."/>
            <person name="Frapy E."/>
            <person name="Garry L."/>
            <person name="Ghigo J.M."/>
            <person name="Gilles A.M."/>
            <person name="Johnson J."/>
            <person name="Le Bouguenec C."/>
            <person name="Lescat M."/>
            <person name="Mangenot S."/>
            <person name="Martinez-Jehanne V."/>
            <person name="Matic I."/>
            <person name="Nassif X."/>
            <person name="Oztas S."/>
            <person name="Petit M.A."/>
            <person name="Pichon C."/>
            <person name="Rouy Z."/>
            <person name="Ruf C.S."/>
            <person name="Schneider D."/>
            <person name="Tourret J."/>
            <person name="Vacherie B."/>
            <person name="Vallenet D."/>
            <person name="Medigue C."/>
            <person name="Rocha E.P.C."/>
            <person name="Denamur E."/>
        </authorList>
    </citation>
    <scope>NUCLEOTIDE SEQUENCE [LARGE SCALE GENOMIC DNA]</scope>
    <source>
        <strain>UMN026 / ExPEC</strain>
    </source>
</reference>
<protein>
    <recommendedName>
        <fullName evidence="1">Nitric oxide reductase FlRd-NAD(+) reductase</fullName>
        <ecNumber evidence="1">1.18.1.-</ecNumber>
    </recommendedName>
    <alternativeName>
        <fullName evidence="1">Flavorubredoxin reductase</fullName>
        <shortName evidence="1">FlRd-reductase</shortName>
        <shortName evidence="1">FlavoRb reductase</shortName>
    </alternativeName>
</protein>
<gene>
    <name evidence="1" type="primary">norW</name>
    <name evidence="1" type="synonym">flrR</name>
    <name type="ordered locus">ECUMN_3032</name>
</gene>
<keyword id="KW-0963">Cytoplasm</keyword>
<keyword id="KW-0274">FAD</keyword>
<keyword id="KW-0285">Flavoprotein</keyword>
<keyword id="KW-0520">NAD</keyword>
<keyword id="KW-0560">Oxidoreductase</keyword>
<dbReference type="EC" id="1.18.1.-" evidence="1"/>
<dbReference type="EMBL" id="CU928163">
    <property type="protein sequence ID" value="CAR14202.1"/>
    <property type="molecule type" value="Genomic_DNA"/>
</dbReference>
<dbReference type="RefSeq" id="WP_000064692.1">
    <property type="nucleotide sequence ID" value="NC_011751.1"/>
</dbReference>
<dbReference type="RefSeq" id="YP_002413724.1">
    <property type="nucleotide sequence ID" value="NC_011751.1"/>
</dbReference>
<dbReference type="SMR" id="B7N6U1"/>
<dbReference type="STRING" id="585056.ECUMN_3032"/>
<dbReference type="KEGG" id="eum:ECUMN_3032"/>
<dbReference type="PATRIC" id="fig|585056.7.peg.3209"/>
<dbReference type="HOGENOM" id="CLU_003291_4_4_6"/>
<dbReference type="UniPathway" id="UPA00638"/>
<dbReference type="Proteomes" id="UP000007097">
    <property type="component" value="Chromosome"/>
</dbReference>
<dbReference type="GO" id="GO:0005737">
    <property type="term" value="C:cytoplasm"/>
    <property type="evidence" value="ECO:0007669"/>
    <property type="project" value="UniProtKB-SubCell"/>
</dbReference>
<dbReference type="GO" id="GO:0016731">
    <property type="term" value="F:oxidoreductase activity, acting on iron-sulfur proteins as donors, NAD or NADP as acceptor"/>
    <property type="evidence" value="ECO:0007669"/>
    <property type="project" value="UniProtKB-UniRule"/>
</dbReference>
<dbReference type="FunFam" id="3.30.390.120:FF:000001">
    <property type="entry name" value="Nitric oxide reductase FlRd-NAD(+) reductase"/>
    <property type="match status" value="1"/>
</dbReference>
<dbReference type="FunFam" id="3.50.50.60:FF:000075">
    <property type="entry name" value="Nitric oxide reductase FlRd-NAD(+) reductase"/>
    <property type="match status" value="1"/>
</dbReference>
<dbReference type="Gene3D" id="3.30.390.120">
    <property type="match status" value="1"/>
</dbReference>
<dbReference type="Gene3D" id="3.50.50.60">
    <property type="entry name" value="FAD/NAD(P)-binding domain"/>
    <property type="match status" value="2"/>
</dbReference>
<dbReference type="HAMAP" id="MF_01313">
    <property type="entry name" value="NorW"/>
    <property type="match status" value="1"/>
</dbReference>
<dbReference type="InterPro" id="IPR050260">
    <property type="entry name" value="FAD-bd_OxRdtase"/>
</dbReference>
<dbReference type="InterPro" id="IPR036188">
    <property type="entry name" value="FAD/NAD-bd_sf"/>
</dbReference>
<dbReference type="InterPro" id="IPR023753">
    <property type="entry name" value="FAD/NAD-binding_dom"/>
</dbReference>
<dbReference type="InterPro" id="IPR023961">
    <property type="entry name" value="NO_rdtase_NorW"/>
</dbReference>
<dbReference type="InterPro" id="IPR041364">
    <property type="entry name" value="Rbx-bd"/>
</dbReference>
<dbReference type="NCBIfam" id="NF003437">
    <property type="entry name" value="PRK04965.1"/>
    <property type="match status" value="1"/>
</dbReference>
<dbReference type="PANTHER" id="PTHR43429:SF3">
    <property type="entry name" value="NITRITE REDUCTASE [NAD(P)H]"/>
    <property type="match status" value="1"/>
</dbReference>
<dbReference type="PANTHER" id="PTHR43429">
    <property type="entry name" value="PYRIDINE NUCLEOTIDE-DISULFIDE OXIDOREDUCTASE DOMAIN-CONTAINING"/>
    <property type="match status" value="1"/>
</dbReference>
<dbReference type="Pfam" id="PF07992">
    <property type="entry name" value="Pyr_redox_2"/>
    <property type="match status" value="1"/>
</dbReference>
<dbReference type="Pfam" id="PF18113">
    <property type="entry name" value="Rbx_binding"/>
    <property type="match status" value="1"/>
</dbReference>
<dbReference type="PRINTS" id="PR00368">
    <property type="entry name" value="FADPNR"/>
</dbReference>
<dbReference type="PRINTS" id="PR00411">
    <property type="entry name" value="PNDRDTASEI"/>
</dbReference>
<dbReference type="SUPFAM" id="SSF51905">
    <property type="entry name" value="FAD/NAD(P)-binding domain"/>
    <property type="match status" value="1"/>
</dbReference>
<sequence length="377" mass="41465">MSNGIVIIGSGFAARQLVKNIRKQDACIPLTLIAADSMDEYNKPDLSHVISQRQRADDLTRQTAGEFAEQFNLHLFPHTWIMDIDAEAHVVKSQNNQWQYDKLVLATGASAFVPPVPGRELMLTLNSQQEYRACETQLRDARRVLIVGGGLIGSELAMDFCRAGKAVTLIDNAASILASLMPPEVSSRLQHRLTEMGVHLLLKSQLQGLEKTDSGILATLDRQRSIEVDAVIAATGLRPETALARRAGLTINRGVCVDSYLQTSNADIYALGDCTEINGQVLPFLQPIQLSAMVLAKNLLGNNTPLKLPAMLVKIKTPELPLHLAGETQRQDLRWQINTERQGMVARGVDDADQLRAFVVSEDRMKEAFGLLKTLPV</sequence>
<proteinExistence type="inferred from homology"/>
<organism>
    <name type="scientific">Escherichia coli O17:K52:H18 (strain UMN026 / ExPEC)</name>
    <dbReference type="NCBI Taxonomy" id="585056"/>
    <lineage>
        <taxon>Bacteria</taxon>
        <taxon>Pseudomonadati</taxon>
        <taxon>Pseudomonadota</taxon>
        <taxon>Gammaproteobacteria</taxon>
        <taxon>Enterobacterales</taxon>
        <taxon>Enterobacteriaceae</taxon>
        <taxon>Escherichia</taxon>
    </lineage>
</organism>
<name>NORW_ECOLU</name>
<evidence type="ECO:0000255" key="1">
    <source>
        <dbReference type="HAMAP-Rule" id="MF_01313"/>
    </source>
</evidence>
<accession>B7N6U1</accession>
<feature type="chain" id="PRO_1000141171" description="Nitric oxide reductase FlRd-NAD(+) reductase">
    <location>
        <begin position="1"/>
        <end position="377"/>
    </location>
</feature>
<comment type="function">
    <text evidence="1">One of at least two accessory proteins for anaerobic nitric oxide (NO) reductase. Reduces the rubredoxin moiety of NO reductase.</text>
</comment>
<comment type="catalytic activity">
    <reaction evidence="1">
        <text>2 reduced [nitric oxide reductase rubredoxin domain] + NAD(+) + H(+) = 2 oxidized [nitric oxide reductase rubredoxin domain] + NADH</text>
        <dbReference type="Rhea" id="RHEA:42960"/>
        <dbReference type="Rhea" id="RHEA-COMP:10304"/>
        <dbReference type="Rhea" id="RHEA-COMP:10305"/>
        <dbReference type="ChEBI" id="CHEBI:15378"/>
        <dbReference type="ChEBI" id="CHEBI:29033"/>
        <dbReference type="ChEBI" id="CHEBI:29034"/>
        <dbReference type="ChEBI" id="CHEBI:57540"/>
        <dbReference type="ChEBI" id="CHEBI:57945"/>
    </reaction>
</comment>
<comment type="cofactor">
    <cofactor evidence="1">
        <name>FAD</name>
        <dbReference type="ChEBI" id="CHEBI:57692"/>
    </cofactor>
</comment>
<comment type="pathway">
    <text evidence="1">Nitrogen metabolism; nitric oxide reduction.</text>
</comment>
<comment type="subcellular location">
    <subcellularLocation>
        <location evidence="1">Cytoplasm</location>
    </subcellularLocation>
</comment>
<comment type="similarity">
    <text evidence="1">Belongs to the FAD-dependent oxidoreductase family.</text>
</comment>